<feature type="chain" id="PRO_0000316871" description="Dynein light chain Tctex-type 4">
    <location>
        <begin position="1"/>
        <end position="219"/>
    </location>
</feature>
<feature type="region of interest" description="Disordered" evidence="2">
    <location>
        <begin position="1"/>
        <end position="84"/>
    </location>
</feature>
<feature type="compositionally biased region" description="Basic and acidic residues" evidence="2">
    <location>
        <begin position="9"/>
        <end position="20"/>
    </location>
</feature>
<feature type="modified residue" description="Phosphoserine" evidence="5">
    <location>
        <position position="64"/>
    </location>
</feature>
<feature type="sequence conflict" description="In Ref. 3; AAI15475." evidence="4" ref="3">
    <original>V</original>
    <variation>M</variation>
    <location>
        <position position="82"/>
    </location>
</feature>
<feature type="sequence conflict" description="In Ref. 3; AAI15475." evidence="4" ref="3">
    <original>E</original>
    <variation>D</variation>
    <location>
        <position position="109"/>
    </location>
</feature>
<sequence length="219" mass="23451">MACRTLPSRRQEEETTKDLALKLPPGKPGGHLPSIDETRPIGPGPASRRGSLPGLHPSFSRRNSLAGPLVGPGGRRPSLGPVPPLGSRVSFSGLPLMLPRRMAPSYRLEPAPGEHWEAAGAQRALEAALTTQLNGVCYCGSEAGKLVQALCEQIHTRVRELNLPRYKLVCNVVLGPREGQGVHVVSRALWDAVHDGLASATFTNPSLFAVATVHAVYWE</sequence>
<protein>
    <recommendedName>
        <fullName>Dynein light chain Tctex-type 4</fullName>
    </recommendedName>
    <alternativeName>
        <fullName>Tctex1 domain-containing protein 4</fullName>
    </alternativeName>
</protein>
<organism>
    <name type="scientific">Mus musculus</name>
    <name type="common">Mouse</name>
    <dbReference type="NCBI Taxonomy" id="10090"/>
    <lineage>
        <taxon>Eukaryota</taxon>
        <taxon>Metazoa</taxon>
        <taxon>Chordata</taxon>
        <taxon>Craniata</taxon>
        <taxon>Vertebrata</taxon>
        <taxon>Euteleostomi</taxon>
        <taxon>Mammalia</taxon>
        <taxon>Eutheria</taxon>
        <taxon>Euarchontoglires</taxon>
        <taxon>Glires</taxon>
        <taxon>Rodentia</taxon>
        <taxon>Myomorpha</taxon>
        <taxon>Muroidea</taxon>
        <taxon>Muridae</taxon>
        <taxon>Murinae</taxon>
        <taxon>Mus</taxon>
        <taxon>Mus</taxon>
    </lineage>
</organism>
<evidence type="ECO:0000250" key="1">
    <source>
        <dbReference type="UniProtKB" id="Q5JR98"/>
    </source>
</evidence>
<evidence type="ECO:0000256" key="2">
    <source>
        <dbReference type="SAM" id="MobiDB-lite"/>
    </source>
</evidence>
<evidence type="ECO:0000269" key="3">
    <source>
    </source>
</evidence>
<evidence type="ECO:0000305" key="4"/>
<evidence type="ECO:0007744" key="5">
    <source>
    </source>
</evidence>
<accession>Q8CDY7</accession>
<accession>A2AE79</accession>
<accession>A2AE80</accession>
<accession>Q14C28</accession>
<dbReference type="EMBL" id="AK029345">
    <property type="protein sequence ID" value="BAC26409.1"/>
    <property type="molecule type" value="mRNA"/>
</dbReference>
<dbReference type="EMBL" id="AL671866">
    <property type="status" value="NOT_ANNOTATED_CDS"/>
    <property type="molecule type" value="Genomic_DNA"/>
</dbReference>
<dbReference type="EMBL" id="BC115474">
    <property type="protein sequence ID" value="AAI15475.1"/>
    <property type="molecule type" value="mRNA"/>
</dbReference>
<dbReference type="CCDS" id="CCDS18528.1"/>
<dbReference type="RefSeq" id="NP_778195.1">
    <property type="nucleotide sequence ID" value="NM_175030.2"/>
</dbReference>
<dbReference type="RefSeq" id="XP_006503160.1">
    <property type="nucleotide sequence ID" value="XM_006503097.5"/>
</dbReference>
<dbReference type="RefSeq" id="XP_006503161.1">
    <property type="nucleotide sequence ID" value="XM_006503098.5"/>
</dbReference>
<dbReference type="RefSeq" id="XP_006503162.1">
    <property type="nucleotide sequence ID" value="XM_006503099.5"/>
</dbReference>
<dbReference type="RefSeq" id="XP_006503163.1">
    <property type="nucleotide sequence ID" value="XM_006503100.5"/>
</dbReference>
<dbReference type="SMR" id="Q8CDY7"/>
<dbReference type="FunCoup" id="Q8CDY7">
    <property type="interactions" value="41"/>
</dbReference>
<dbReference type="STRING" id="10090.ENSMUSP00000052243"/>
<dbReference type="iPTMnet" id="Q8CDY7"/>
<dbReference type="PhosphoSitePlus" id="Q8CDY7"/>
<dbReference type="PaxDb" id="10090-ENSMUSP00000052243"/>
<dbReference type="ProteomicsDB" id="263259"/>
<dbReference type="Antibodypedia" id="32555">
    <property type="antibodies" value="65 antibodies from 21 providers"/>
</dbReference>
<dbReference type="Ensembl" id="ENSMUST00000062206.3">
    <property type="protein sequence ID" value="ENSMUSP00000052243.3"/>
    <property type="gene ID" value="ENSMUSG00000047671.9"/>
</dbReference>
<dbReference type="GeneID" id="242646"/>
<dbReference type="KEGG" id="mmu:242646"/>
<dbReference type="UCSC" id="uc008uia.1">
    <property type="organism name" value="mouse"/>
</dbReference>
<dbReference type="AGR" id="MGI:3045358"/>
<dbReference type="CTD" id="343521"/>
<dbReference type="MGI" id="MGI:3045358">
    <property type="gene designation" value="Dynlt4"/>
</dbReference>
<dbReference type="VEuPathDB" id="HostDB:ENSMUSG00000047671"/>
<dbReference type="eggNOG" id="KOG4108">
    <property type="taxonomic scope" value="Eukaryota"/>
</dbReference>
<dbReference type="GeneTree" id="ENSGT00940000162474"/>
<dbReference type="HOGENOM" id="CLU_097204_1_1_1"/>
<dbReference type="InParanoid" id="Q8CDY7"/>
<dbReference type="OMA" id="CPPRYKL"/>
<dbReference type="OrthoDB" id="10260741at2759"/>
<dbReference type="PhylomeDB" id="Q8CDY7"/>
<dbReference type="TreeFam" id="TF313904"/>
<dbReference type="BioGRID-ORCS" id="242646">
    <property type="hits" value="3 hits in 78 CRISPR screens"/>
</dbReference>
<dbReference type="PRO" id="PR:Q8CDY7"/>
<dbReference type="Proteomes" id="UP000000589">
    <property type="component" value="Chromosome 4"/>
</dbReference>
<dbReference type="RNAct" id="Q8CDY7">
    <property type="molecule type" value="protein"/>
</dbReference>
<dbReference type="Bgee" id="ENSMUSG00000047671">
    <property type="expression patterns" value="Expressed in granulocyte and 23 other cell types or tissues"/>
</dbReference>
<dbReference type="ExpressionAtlas" id="Q8CDY7">
    <property type="expression patterns" value="baseline and differential"/>
</dbReference>
<dbReference type="GO" id="GO:0001669">
    <property type="term" value="C:acrosomal vesicle"/>
    <property type="evidence" value="ECO:0000314"/>
    <property type="project" value="MGI"/>
</dbReference>
<dbReference type="GO" id="GO:0005930">
    <property type="term" value="C:axoneme"/>
    <property type="evidence" value="ECO:0000314"/>
    <property type="project" value="MGI"/>
</dbReference>
<dbReference type="GO" id="GO:0005737">
    <property type="term" value="C:cytoplasm"/>
    <property type="evidence" value="ECO:0000314"/>
    <property type="project" value="MGI"/>
</dbReference>
<dbReference type="GO" id="GO:0005815">
    <property type="term" value="C:microtubule organizing center"/>
    <property type="evidence" value="ECO:0000314"/>
    <property type="project" value="MGI"/>
</dbReference>
<dbReference type="GO" id="GO:0005730">
    <property type="term" value="C:nucleolus"/>
    <property type="evidence" value="ECO:0007669"/>
    <property type="project" value="Ensembl"/>
</dbReference>
<dbReference type="GO" id="GO:0005634">
    <property type="term" value="C:nucleus"/>
    <property type="evidence" value="ECO:0000314"/>
    <property type="project" value="MGI"/>
</dbReference>
<dbReference type="GO" id="GO:0036126">
    <property type="term" value="C:sperm flagellum"/>
    <property type="evidence" value="ECO:0000266"/>
    <property type="project" value="MGI"/>
</dbReference>
<dbReference type="GO" id="GO:0008157">
    <property type="term" value="F:protein phosphatase 1 binding"/>
    <property type="evidence" value="ECO:0000266"/>
    <property type="project" value="MGI"/>
</dbReference>
<dbReference type="CDD" id="cd21461">
    <property type="entry name" value="DLC-like_TCTEX1D4"/>
    <property type="match status" value="1"/>
</dbReference>
<dbReference type="FunFam" id="3.30.1140.40:FF:000003">
    <property type="entry name" value="tctex1 domain-containing protein 2"/>
    <property type="match status" value="1"/>
</dbReference>
<dbReference type="Gene3D" id="3.30.1140.40">
    <property type="entry name" value="Tctex-1"/>
    <property type="match status" value="1"/>
</dbReference>
<dbReference type="InterPro" id="IPR005334">
    <property type="entry name" value="Tctex-1-like"/>
</dbReference>
<dbReference type="InterPro" id="IPR038586">
    <property type="entry name" value="Tctex-1-like_sf"/>
</dbReference>
<dbReference type="PANTHER" id="PTHR21255:SF55">
    <property type="entry name" value="DYNEIN LIGHT CHAIN TCTEX-TYPE 4"/>
    <property type="match status" value="1"/>
</dbReference>
<dbReference type="PANTHER" id="PTHR21255">
    <property type="entry name" value="T-COMPLEX-ASSOCIATED-TESTIS-EXPRESSED 1/ DYNEIN LIGHT CHAIN"/>
    <property type="match status" value="1"/>
</dbReference>
<dbReference type="Pfam" id="PF03645">
    <property type="entry name" value="Tctex-1"/>
    <property type="match status" value="1"/>
</dbReference>
<keyword id="KW-0966">Cell projection</keyword>
<keyword id="KW-0969">Cilium</keyword>
<keyword id="KW-0963">Cytoplasm</keyword>
<keyword id="KW-0968">Cytoplasmic vesicle</keyword>
<keyword id="KW-0206">Cytoskeleton</keyword>
<keyword id="KW-0282">Flagellum</keyword>
<keyword id="KW-0539">Nucleus</keyword>
<keyword id="KW-0597">Phosphoprotein</keyword>
<keyword id="KW-1185">Reference proteome</keyword>
<name>DYLT4_MOUSE</name>
<comment type="subunit">
    <text evidence="1">Interacts with ENG/endoglin, TGFBR2 and TGFBR3. Interacts with PPP1CC.</text>
</comment>
<comment type="subcellular location">
    <subcellularLocation>
        <location evidence="1">Cell projection</location>
        <location evidence="1">Cilium</location>
        <location evidence="1">Flagellum</location>
    </subcellularLocation>
    <subcellularLocation>
        <location evidence="3">Cytoplasmic vesicle</location>
        <location evidence="3">Secretory vesicle</location>
        <location evidence="3">Acrosome</location>
    </subcellularLocation>
    <subcellularLocation>
        <location evidence="1">Cytoplasm</location>
        <location evidence="1">Cytoskeleton</location>
        <location evidence="1">Cilium axoneme</location>
    </subcellularLocation>
    <subcellularLocation>
        <location evidence="3">Cytoplasm</location>
    </subcellularLocation>
    <subcellularLocation>
        <location evidence="3">Nucleus</location>
    </subcellularLocation>
    <subcellularLocation>
        <location evidence="1">Cytoplasm</location>
        <location evidence="1">Cytoskeleton</location>
        <location evidence="1">Microtubule organizing center</location>
    </subcellularLocation>
    <text evidence="1">Present along the entire length of the flagellum, including principal and endpiece, and more predominantly in the midpiece region.</text>
</comment>
<comment type="developmental stage">
    <text evidence="3">Expression is elevated in spermatocytes, this expression is maintained high in the round spermatids with a decreased in elongated spermatid.</text>
</comment>
<comment type="similarity">
    <text evidence="4">Belongs to the dynein light chain Tctex-type family.</text>
</comment>
<proteinExistence type="evidence at protein level"/>
<gene>
    <name type="primary">Dynlt4</name>
    <name type="synonym">Tctex1d4</name>
</gene>
<reference key="1">
    <citation type="journal article" date="2005" name="Science">
        <title>The transcriptional landscape of the mammalian genome.</title>
        <authorList>
            <person name="Carninci P."/>
            <person name="Kasukawa T."/>
            <person name="Katayama S."/>
            <person name="Gough J."/>
            <person name="Frith M.C."/>
            <person name="Maeda N."/>
            <person name="Oyama R."/>
            <person name="Ravasi T."/>
            <person name="Lenhard B."/>
            <person name="Wells C."/>
            <person name="Kodzius R."/>
            <person name="Shimokawa K."/>
            <person name="Bajic V.B."/>
            <person name="Brenner S.E."/>
            <person name="Batalov S."/>
            <person name="Forrest A.R."/>
            <person name="Zavolan M."/>
            <person name="Davis M.J."/>
            <person name="Wilming L.G."/>
            <person name="Aidinis V."/>
            <person name="Allen J.E."/>
            <person name="Ambesi-Impiombato A."/>
            <person name="Apweiler R."/>
            <person name="Aturaliya R.N."/>
            <person name="Bailey T.L."/>
            <person name="Bansal M."/>
            <person name="Baxter L."/>
            <person name="Beisel K.W."/>
            <person name="Bersano T."/>
            <person name="Bono H."/>
            <person name="Chalk A.M."/>
            <person name="Chiu K.P."/>
            <person name="Choudhary V."/>
            <person name="Christoffels A."/>
            <person name="Clutterbuck D.R."/>
            <person name="Crowe M.L."/>
            <person name="Dalla E."/>
            <person name="Dalrymple B.P."/>
            <person name="de Bono B."/>
            <person name="Della Gatta G."/>
            <person name="di Bernardo D."/>
            <person name="Down T."/>
            <person name="Engstrom P."/>
            <person name="Fagiolini M."/>
            <person name="Faulkner G."/>
            <person name="Fletcher C.F."/>
            <person name="Fukushima T."/>
            <person name="Furuno M."/>
            <person name="Futaki S."/>
            <person name="Gariboldi M."/>
            <person name="Georgii-Hemming P."/>
            <person name="Gingeras T.R."/>
            <person name="Gojobori T."/>
            <person name="Green R.E."/>
            <person name="Gustincich S."/>
            <person name="Harbers M."/>
            <person name="Hayashi Y."/>
            <person name="Hensch T.K."/>
            <person name="Hirokawa N."/>
            <person name="Hill D."/>
            <person name="Huminiecki L."/>
            <person name="Iacono M."/>
            <person name="Ikeo K."/>
            <person name="Iwama A."/>
            <person name="Ishikawa T."/>
            <person name="Jakt M."/>
            <person name="Kanapin A."/>
            <person name="Katoh M."/>
            <person name="Kawasawa Y."/>
            <person name="Kelso J."/>
            <person name="Kitamura H."/>
            <person name="Kitano H."/>
            <person name="Kollias G."/>
            <person name="Krishnan S.P."/>
            <person name="Kruger A."/>
            <person name="Kummerfeld S.K."/>
            <person name="Kurochkin I.V."/>
            <person name="Lareau L.F."/>
            <person name="Lazarevic D."/>
            <person name="Lipovich L."/>
            <person name="Liu J."/>
            <person name="Liuni S."/>
            <person name="McWilliam S."/>
            <person name="Madan Babu M."/>
            <person name="Madera M."/>
            <person name="Marchionni L."/>
            <person name="Matsuda H."/>
            <person name="Matsuzawa S."/>
            <person name="Miki H."/>
            <person name="Mignone F."/>
            <person name="Miyake S."/>
            <person name="Morris K."/>
            <person name="Mottagui-Tabar S."/>
            <person name="Mulder N."/>
            <person name="Nakano N."/>
            <person name="Nakauchi H."/>
            <person name="Ng P."/>
            <person name="Nilsson R."/>
            <person name="Nishiguchi S."/>
            <person name="Nishikawa S."/>
            <person name="Nori F."/>
            <person name="Ohara O."/>
            <person name="Okazaki Y."/>
            <person name="Orlando V."/>
            <person name="Pang K.C."/>
            <person name="Pavan W.J."/>
            <person name="Pavesi G."/>
            <person name="Pesole G."/>
            <person name="Petrovsky N."/>
            <person name="Piazza S."/>
            <person name="Reed J."/>
            <person name="Reid J.F."/>
            <person name="Ring B.Z."/>
            <person name="Ringwald M."/>
            <person name="Rost B."/>
            <person name="Ruan Y."/>
            <person name="Salzberg S.L."/>
            <person name="Sandelin A."/>
            <person name="Schneider C."/>
            <person name="Schoenbach C."/>
            <person name="Sekiguchi K."/>
            <person name="Semple C.A."/>
            <person name="Seno S."/>
            <person name="Sessa L."/>
            <person name="Sheng Y."/>
            <person name="Shibata Y."/>
            <person name="Shimada H."/>
            <person name="Shimada K."/>
            <person name="Silva D."/>
            <person name="Sinclair B."/>
            <person name="Sperling S."/>
            <person name="Stupka E."/>
            <person name="Sugiura K."/>
            <person name="Sultana R."/>
            <person name="Takenaka Y."/>
            <person name="Taki K."/>
            <person name="Tammoja K."/>
            <person name="Tan S.L."/>
            <person name="Tang S."/>
            <person name="Taylor M.S."/>
            <person name="Tegner J."/>
            <person name="Teichmann S.A."/>
            <person name="Ueda H.R."/>
            <person name="van Nimwegen E."/>
            <person name="Verardo R."/>
            <person name="Wei C.L."/>
            <person name="Yagi K."/>
            <person name="Yamanishi H."/>
            <person name="Zabarovsky E."/>
            <person name="Zhu S."/>
            <person name="Zimmer A."/>
            <person name="Hide W."/>
            <person name="Bult C."/>
            <person name="Grimmond S.M."/>
            <person name="Teasdale R.D."/>
            <person name="Liu E.T."/>
            <person name="Brusic V."/>
            <person name="Quackenbush J."/>
            <person name="Wahlestedt C."/>
            <person name="Mattick J.S."/>
            <person name="Hume D.A."/>
            <person name="Kai C."/>
            <person name="Sasaki D."/>
            <person name="Tomaru Y."/>
            <person name="Fukuda S."/>
            <person name="Kanamori-Katayama M."/>
            <person name="Suzuki M."/>
            <person name="Aoki J."/>
            <person name="Arakawa T."/>
            <person name="Iida J."/>
            <person name="Imamura K."/>
            <person name="Itoh M."/>
            <person name="Kato T."/>
            <person name="Kawaji H."/>
            <person name="Kawagashira N."/>
            <person name="Kawashima T."/>
            <person name="Kojima M."/>
            <person name="Kondo S."/>
            <person name="Konno H."/>
            <person name="Nakano K."/>
            <person name="Ninomiya N."/>
            <person name="Nishio T."/>
            <person name="Okada M."/>
            <person name="Plessy C."/>
            <person name="Shibata K."/>
            <person name="Shiraki T."/>
            <person name="Suzuki S."/>
            <person name="Tagami M."/>
            <person name="Waki K."/>
            <person name="Watahiki A."/>
            <person name="Okamura-Oho Y."/>
            <person name="Suzuki H."/>
            <person name="Kawai J."/>
            <person name="Hayashizaki Y."/>
        </authorList>
    </citation>
    <scope>NUCLEOTIDE SEQUENCE [LARGE SCALE MRNA]</scope>
    <source>
        <strain>C57BL/6J</strain>
        <tissue>Head</tissue>
    </source>
</reference>
<reference key="2">
    <citation type="journal article" date="2009" name="PLoS Biol.">
        <title>Lineage-specific biology revealed by a finished genome assembly of the mouse.</title>
        <authorList>
            <person name="Church D.M."/>
            <person name="Goodstadt L."/>
            <person name="Hillier L.W."/>
            <person name="Zody M.C."/>
            <person name="Goldstein S."/>
            <person name="She X."/>
            <person name="Bult C.J."/>
            <person name="Agarwala R."/>
            <person name="Cherry J.L."/>
            <person name="DiCuccio M."/>
            <person name="Hlavina W."/>
            <person name="Kapustin Y."/>
            <person name="Meric P."/>
            <person name="Maglott D."/>
            <person name="Birtle Z."/>
            <person name="Marques A.C."/>
            <person name="Graves T."/>
            <person name="Zhou S."/>
            <person name="Teague B."/>
            <person name="Potamousis K."/>
            <person name="Churas C."/>
            <person name="Place M."/>
            <person name="Herschleb J."/>
            <person name="Runnheim R."/>
            <person name="Forrest D."/>
            <person name="Amos-Landgraf J."/>
            <person name="Schwartz D.C."/>
            <person name="Cheng Z."/>
            <person name="Lindblad-Toh K."/>
            <person name="Eichler E.E."/>
            <person name="Ponting C.P."/>
        </authorList>
    </citation>
    <scope>NUCLEOTIDE SEQUENCE [LARGE SCALE GENOMIC DNA]</scope>
    <source>
        <strain>C57BL/6J</strain>
    </source>
</reference>
<reference key="3">
    <citation type="journal article" date="2004" name="Genome Res.">
        <title>The status, quality, and expansion of the NIH full-length cDNA project: the Mammalian Gene Collection (MGC).</title>
        <authorList>
            <consortium name="The MGC Project Team"/>
        </authorList>
    </citation>
    <scope>NUCLEOTIDE SEQUENCE [LARGE SCALE MRNA]</scope>
</reference>
<reference key="4">
    <citation type="journal article" date="2010" name="Cell">
        <title>A tissue-specific atlas of mouse protein phosphorylation and expression.</title>
        <authorList>
            <person name="Huttlin E.L."/>
            <person name="Jedrychowski M.P."/>
            <person name="Elias J.E."/>
            <person name="Goswami T."/>
            <person name="Rad R."/>
            <person name="Beausoleil S.A."/>
            <person name="Villen J."/>
            <person name="Haas W."/>
            <person name="Sowa M.E."/>
            <person name="Gygi S.P."/>
        </authorList>
    </citation>
    <scope>PHOSPHORYLATION [LARGE SCALE ANALYSIS] AT SER-64</scope>
    <scope>IDENTIFICATION BY MASS SPECTROMETRY [LARGE SCALE ANALYSIS]</scope>
    <source>
        <tissue>Lung</tissue>
    </source>
</reference>
<reference key="5">
    <citation type="journal article" date="2013" name="Biol. Open">
        <title>TCTEX1D4, a novel protein phosphatase 1 interactor: connecting the phosphatase to the microtubule network.</title>
        <authorList>
            <person name="Korrodi-Gregorio L."/>
            <person name="Vieira S.I."/>
            <person name="Esteves S.L."/>
            <person name="Silva J.V."/>
            <person name="Freitas M.J."/>
            <person name="Brauns A.K."/>
            <person name="Luers G."/>
            <person name="Abrantes J."/>
            <person name="Esteves P.J."/>
            <person name="da Cruz e Silva O.A."/>
            <person name="Fardilha M."/>
            <person name="da Cruz e Silva E.F."/>
        </authorList>
    </citation>
    <scope>SUBCELLULAR LOCATION</scope>
    <scope>DEVELOPMENTAL STAGE</scope>
</reference>